<organism>
    <name type="scientific">Bos taurus</name>
    <name type="common">Bovine</name>
    <dbReference type="NCBI Taxonomy" id="9913"/>
    <lineage>
        <taxon>Eukaryota</taxon>
        <taxon>Metazoa</taxon>
        <taxon>Chordata</taxon>
        <taxon>Craniata</taxon>
        <taxon>Vertebrata</taxon>
        <taxon>Euteleostomi</taxon>
        <taxon>Mammalia</taxon>
        <taxon>Eutheria</taxon>
        <taxon>Laurasiatheria</taxon>
        <taxon>Artiodactyla</taxon>
        <taxon>Ruminantia</taxon>
        <taxon>Pecora</taxon>
        <taxon>Bovidae</taxon>
        <taxon>Bovinae</taxon>
        <taxon>Bos</taxon>
    </lineage>
</organism>
<dbReference type="EMBL" id="BC102995">
    <property type="protein sequence ID" value="AAI02996.1"/>
    <property type="molecule type" value="mRNA"/>
</dbReference>
<dbReference type="PIR" id="A03018">
    <property type="entry name" value="TPBOCC"/>
</dbReference>
<dbReference type="RefSeq" id="NP_001029523.1">
    <property type="nucleotide sequence ID" value="NM_001034351.2"/>
</dbReference>
<dbReference type="BMRB" id="P63315"/>
<dbReference type="SMR" id="P63315"/>
<dbReference type="FunCoup" id="P63315">
    <property type="interactions" value="68"/>
</dbReference>
<dbReference type="STRING" id="9913.ENSBTAP00000055780"/>
<dbReference type="ChEMBL" id="CHEMBL5465295"/>
<dbReference type="iPTMnet" id="P63315"/>
<dbReference type="PaxDb" id="9913-ENSBTAP00000055780"/>
<dbReference type="Ensembl" id="ENSBTAT00000062950.3">
    <property type="protein sequence ID" value="ENSBTAP00000055780.1"/>
    <property type="gene ID" value="ENSBTAG00000045757.3"/>
</dbReference>
<dbReference type="GeneID" id="509486"/>
<dbReference type="KEGG" id="bta:509486"/>
<dbReference type="CTD" id="7134"/>
<dbReference type="VEuPathDB" id="HostDB:ENSBTAG00000045757"/>
<dbReference type="VGNC" id="VGNC:36189">
    <property type="gene designation" value="TNNC1"/>
</dbReference>
<dbReference type="eggNOG" id="KOG0027">
    <property type="taxonomic scope" value="Eukaryota"/>
</dbReference>
<dbReference type="GeneTree" id="ENSGT00940000153541"/>
<dbReference type="HOGENOM" id="CLU_061288_2_5_1"/>
<dbReference type="InParanoid" id="P63315"/>
<dbReference type="OMA" id="QKSEFRA"/>
<dbReference type="OrthoDB" id="26525at2759"/>
<dbReference type="TreeFam" id="TF318191"/>
<dbReference type="Reactome" id="R-BTA-390522">
    <property type="pathway name" value="Striated Muscle Contraction"/>
</dbReference>
<dbReference type="Proteomes" id="UP000009136">
    <property type="component" value="Chromosome 22"/>
</dbReference>
<dbReference type="Bgee" id="ENSBTAG00000045757">
    <property type="expression patterns" value="Expressed in tongue muscle and 93 other cell types or tissues"/>
</dbReference>
<dbReference type="GO" id="GO:0097512">
    <property type="term" value="C:cardiac myofibril"/>
    <property type="evidence" value="ECO:0000314"/>
    <property type="project" value="CAFA"/>
</dbReference>
<dbReference type="GO" id="GO:1990584">
    <property type="term" value="C:cardiac Troponin complex"/>
    <property type="evidence" value="ECO:0000314"/>
    <property type="project" value="CAFA"/>
</dbReference>
<dbReference type="GO" id="GO:0005509">
    <property type="term" value="F:calcium ion binding"/>
    <property type="evidence" value="ECO:0000314"/>
    <property type="project" value="AgBase"/>
</dbReference>
<dbReference type="GO" id="GO:0048306">
    <property type="term" value="F:calcium-dependent protein binding"/>
    <property type="evidence" value="ECO:0000314"/>
    <property type="project" value="CAFA"/>
</dbReference>
<dbReference type="GO" id="GO:0031013">
    <property type="term" value="F:troponin I binding"/>
    <property type="evidence" value="ECO:0000353"/>
    <property type="project" value="CAFA"/>
</dbReference>
<dbReference type="GO" id="GO:0060048">
    <property type="term" value="P:cardiac muscle contraction"/>
    <property type="evidence" value="ECO:0000318"/>
    <property type="project" value="GO_Central"/>
</dbReference>
<dbReference type="GO" id="GO:0003009">
    <property type="term" value="P:skeletal muscle contraction"/>
    <property type="evidence" value="ECO:0000318"/>
    <property type="project" value="GO_Central"/>
</dbReference>
<dbReference type="CDD" id="cd00051">
    <property type="entry name" value="EFh"/>
    <property type="match status" value="2"/>
</dbReference>
<dbReference type="DisProt" id="DP00249"/>
<dbReference type="FunFam" id="1.10.238.10:FF:000033">
    <property type="entry name" value="Troponin C, slow skeletal and cardiac muscles"/>
    <property type="match status" value="1"/>
</dbReference>
<dbReference type="Gene3D" id="1.10.238.10">
    <property type="entry name" value="EF-hand"/>
    <property type="match status" value="2"/>
</dbReference>
<dbReference type="InterPro" id="IPR050230">
    <property type="entry name" value="CALM/Myosin/TropC-like"/>
</dbReference>
<dbReference type="InterPro" id="IPR011992">
    <property type="entry name" value="EF-hand-dom_pair"/>
</dbReference>
<dbReference type="InterPro" id="IPR018247">
    <property type="entry name" value="EF_Hand_1_Ca_BS"/>
</dbReference>
<dbReference type="InterPro" id="IPR002048">
    <property type="entry name" value="EF_hand_dom"/>
</dbReference>
<dbReference type="PANTHER" id="PTHR23048">
    <property type="entry name" value="MYOSIN LIGHT CHAIN 1, 3"/>
    <property type="match status" value="1"/>
</dbReference>
<dbReference type="PANTHER" id="PTHR23048:SF47">
    <property type="entry name" value="TROPONIN C1, SLOW SKELETAL AND CARDIAC TYPE"/>
    <property type="match status" value="1"/>
</dbReference>
<dbReference type="Pfam" id="PF13499">
    <property type="entry name" value="EF-hand_7"/>
    <property type="match status" value="1"/>
</dbReference>
<dbReference type="Pfam" id="PF13833">
    <property type="entry name" value="EF-hand_8"/>
    <property type="match status" value="1"/>
</dbReference>
<dbReference type="PRINTS" id="PR00450">
    <property type="entry name" value="RECOVERIN"/>
</dbReference>
<dbReference type="SMART" id="SM00054">
    <property type="entry name" value="EFh"/>
    <property type="match status" value="4"/>
</dbReference>
<dbReference type="SUPFAM" id="SSF47473">
    <property type="entry name" value="EF-hand"/>
    <property type="match status" value="1"/>
</dbReference>
<dbReference type="PROSITE" id="PS00018">
    <property type="entry name" value="EF_HAND_1"/>
    <property type="match status" value="3"/>
</dbReference>
<dbReference type="PROSITE" id="PS50222">
    <property type="entry name" value="EF_HAND_2"/>
    <property type="match status" value="4"/>
</dbReference>
<evidence type="ECO:0000250" key="1">
    <source>
        <dbReference type="UniProtKB" id="P19123"/>
    </source>
</evidence>
<evidence type="ECO:0000255" key="2">
    <source>
        <dbReference type="PROSITE-ProRule" id="PRU00448"/>
    </source>
</evidence>
<evidence type="ECO:0000269" key="3">
    <source>
    </source>
</evidence>
<evidence type="ECO:0000305" key="4"/>
<reference key="1">
    <citation type="journal article" date="1976" name="Biochemistry">
        <title>Determination of the complete amino acid sequence of bovine cardiac troponin C.</title>
        <authorList>
            <person name="van Eerd J.-P."/>
            <person name="Takahashi K."/>
        </authorList>
    </citation>
    <scope>PROTEIN SEQUENCE</scope>
    <scope>ACETYLATION AT MET-1</scope>
    <source>
        <tissue>Heart muscle</tissue>
    </source>
</reference>
<reference key="2">
    <citation type="submission" date="2005-08" db="EMBL/GenBank/DDBJ databases">
        <authorList>
            <consortium name="NIH - Mammalian Gene Collection (MGC) project"/>
        </authorList>
    </citation>
    <scope>NUCLEOTIDE SEQUENCE [LARGE SCALE MRNA]</scope>
    <source>
        <strain>Hereford</strain>
        <tissue>Heart ventricle</tissue>
    </source>
</reference>
<name>TNNC1_BOVIN</name>
<keyword id="KW-0007">Acetylation</keyword>
<keyword id="KW-0106">Calcium</keyword>
<keyword id="KW-0903">Direct protein sequencing</keyword>
<keyword id="KW-0479">Metal-binding</keyword>
<keyword id="KW-0514">Muscle protein</keyword>
<keyword id="KW-0597">Phosphoprotein</keyword>
<keyword id="KW-1185">Reference proteome</keyword>
<keyword id="KW-0677">Repeat</keyword>
<protein>
    <recommendedName>
        <fullName>Troponin C, slow skeletal and cardiac muscles</fullName>
        <shortName>TN-C</shortName>
    </recommendedName>
</protein>
<gene>
    <name type="primary">TNNC1</name>
    <name type="synonym">TNNC</name>
</gene>
<sequence>MDDIYKAAVEQLTEEQKNEFKAAFDIFVLGAEDGCISTKELGKVMRMLGQNPTPEELQEMIDEVDEDGSGTVDFDEFLVMMVRCMKDDSKGKSEEELSDLFRMFDKNADGYIDLEELKIMLQATGETITEDDIEELMKDGDKNNDGRIDYDEFLEFMKGVE</sequence>
<proteinExistence type="evidence at protein level"/>
<comment type="function">
    <text>Troponin is the central regulatory protein of striated muscle contraction. Tn consists of three components: Tn-I which is the inhibitor of actomyosin ATPase, Tn-T which contains the binding site for tropomyosin and Tn-C. The binding of calcium to Tn-C abolishes the inhibitory action of Tn on actin filaments.</text>
</comment>
<comment type="miscellaneous">
    <text>Cardiac muscle Tn-C can bind 3 calcium ions per molecule. Domain I does not bind calcium.</text>
</comment>
<comment type="similarity">
    <text evidence="4">Belongs to the troponin C family.</text>
</comment>
<feature type="chain" id="PRO_0000073696" description="Troponin C, slow skeletal and cardiac muscles">
    <location>
        <begin position="1"/>
        <end position="161"/>
    </location>
</feature>
<feature type="domain" description="EF-hand 1" evidence="2">
    <location>
        <begin position="16"/>
        <end position="51"/>
    </location>
</feature>
<feature type="domain" description="EF-hand 2" evidence="2">
    <location>
        <begin position="52"/>
        <end position="87"/>
    </location>
</feature>
<feature type="domain" description="EF-hand 3" evidence="2">
    <location>
        <begin position="92"/>
        <end position="127"/>
    </location>
</feature>
<feature type="domain" description="EF-hand 4" evidence="2">
    <location>
        <begin position="128"/>
        <end position="161"/>
    </location>
</feature>
<feature type="binding site" evidence="2">
    <location>
        <position position="65"/>
    </location>
    <ligand>
        <name>Ca(2+)</name>
        <dbReference type="ChEBI" id="CHEBI:29108"/>
        <label>1</label>
    </ligand>
</feature>
<feature type="binding site" evidence="2">
    <location>
        <position position="67"/>
    </location>
    <ligand>
        <name>Ca(2+)</name>
        <dbReference type="ChEBI" id="CHEBI:29108"/>
        <label>1</label>
    </ligand>
</feature>
<feature type="binding site" evidence="2">
    <location>
        <position position="69"/>
    </location>
    <ligand>
        <name>Ca(2+)</name>
        <dbReference type="ChEBI" id="CHEBI:29108"/>
        <label>1</label>
    </ligand>
</feature>
<feature type="binding site" evidence="2">
    <location>
        <position position="71"/>
    </location>
    <ligand>
        <name>Ca(2+)</name>
        <dbReference type="ChEBI" id="CHEBI:29108"/>
        <label>1</label>
    </ligand>
</feature>
<feature type="binding site" evidence="2">
    <location>
        <position position="76"/>
    </location>
    <ligand>
        <name>Ca(2+)</name>
        <dbReference type="ChEBI" id="CHEBI:29108"/>
        <label>1</label>
    </ligand>
</feature>
<feature type="binding site" evidence="2">
    <location>
        <position position="105"/>
    </location>
    <ligand>
        <name>Ca(2+)</name>
        <dbReference type="ChEBI" id="CHEBI:29108"/>
        <label>2</label>
    </ligand>
</feature>
<feature type="binding site" evidence="2">
    <location>
        <position position="107"/>
    </location>
    <ligand>
        <name>Ca(2+)</name>
        <dbReference type="ChEBI" id="CHEBI:29108"/>
        <label>2</label>
    </ligand>
</feature>
<feature type="binding site" evidence="2">
    <location>
        <position position="109"/>
    </location>
    <ligand>
        <name>Ca(2+)</name>
        <dbReference type="ChEBI" id="CHEBI:29108"/>
        <label>2</label>
    </ligand>
</feature>
<feature type="binding site" evidence="2">
    <location>
        <position position="111"/>
    </location>
    <ligand>
        <name>Ca(2+)</name>
        <dbReference type="ChEBI" id="CHEBI:29108"/>
        <label>2</label>
    </ligand>
</feature>
<feature type="binding site" evidence="2">
    <location>
        <position position="116"/>
    </location>
    <ligand>
        <name>Ca(2+)</name>
        <dbReference type="ChEBI" id="CHEBI:29108"/>
        <label>2</label>
    </ligand>
</feature>
<feature type="binding site" evidence="2">
    <location>
        <position position="141"/>
    </location>
    <ligand>
        <name>Ca(2+)</name>
        <dbReference type="ChEBI" id="CHEBI:29108"/>
        <label>3</label>
    </ligand>
</feature>
<feature type="binding site" evidence="2">
    <location>
        <position position="143"/>
    </location>
    <ligand>
        <name>Ca(2+)</name>
        <dbReference type="ChEBI" id="CHEBI:29108"/>
        <label>3</label>
    </ligand>
</feature>
<feature type="binding site" evidence="2">
    <location>
        <position position="145"/>
    </location>
    <ligand>
        <name>Ca(2+)</name>
        <dbReference type="ChEBI" id="CHEBI:29108"/>
        <label>3</label>
    </ligand>
</feature>
<feature type="binding site" evidence="2">
    <location>
        <position position="147"/>
    </location>
    <ligand>
        <name>Ca(2+)</name>
        <dbReference type="ChEBI" id="CHEBI:29108"/>
        <label>3</label>
    </ligand>
</feature>
<feature type="binding site" evidence="2">
    <location>
        <position position="152"/>
    </location>
    <ligand>
        <name>Ca(2+)</name>
        <dbReference type="ChEBI" id="CHEBI:29108"/>
        <label>3</label>
    </ligand>
</feature>
<feature type="modified residue" description="N-acetylmethionine" evidence="3">
    <location>
        <position position="1"/>
    </location>
</feature>
<feature type="modified residue" description="Phosphoserine" evidence="1">
    <location>
        <position position="98"/>
    </location>
</feature>
<accession>P63315</accession>
<accession>O14800</accession>
<accession>P02590</accession>
<accession>P04463</accession>
<accession>Q3SZB2</accession>